<dbReference type="EMBL" id="AC013430">
    <property type="protein sequence ID" value="AAF71812.1"/>
    <property type="status" value="ALT_SEQ"/>
    <property type="molecule type" value="Genomic_DNA"/>
</dbReference>
<dbReference type="EMBL" id="CP002684">
    <property type="protein sequence ID" value="AEE36105.1"/>
    <property type="molecule type" value="Genomic_DNA"/>
</dbReference>
<dbReference type="PIR" id="G96812">
    <property type="entry name" value="G96812"/>
</dbReference>
<dbReference type="RefSeq" id="NP_177964.2">
    <property type="nucleotide sequence ID" value="NM_106490.4"/>
</dbReference>
<dbReference type="SMR" id="Q9M9F9"/>
<dbReference type="BioGRID" id="29398">
    <property type="interactions" value="2"/>
</dbReference>
<dbReference type="FunCoup" id="Q9M9F9">
    <property type="interactions" value="184"/>
</dbReference>
<dbReference type="STRING" id="3702.Q9M9F9"/>
<dbReference type="iPTMnet" id="Q9M9F9"/>
<dbReference type="PaxDb" id="3702-AT1G78430.1"/>
<dbReference type="ProteomicsDB" id="228770"/>
<dbReference type="EnsemblPlants" id="AT1G78430.1">
    <property type="protein sequence ID" value="AT1G78430.1"/>
    <property type="gene ID" value="AT1G78430"/>
</dbReference>
<dbReference type="GeneID" id="844179"/>
<dbReference type="Gramene" id="AT1G78430.1">
    <property type="protein sequence ID" value="AT1G78430.1"/>
    <property type="gene ID" value="AT1G78430"/>
</dbReference>
<dbReference type="KEGG" id="ath:AT1G78430"/>
<dbReference type="Araport" id="AT1G78430"/>
<dbReference type="TAIR" id="AT1G78430">
    <property type="gene designation" value="RIP2"/>
</dbReference>
<dbReference type="eggNOG" id="ENOG502QVSP">
    <property type="taxonomic scope" value="Eukaryota"/>
</dbReference>
<dbReference type="HOGENOM" id="CLU_043733_1_0_1"/>
<dbReference type="InParanoid" id="Q9M9F9"/>
<dbReference type="OMA" id="FACIFHE"/>
<dbReference type="OrthoDB" id="782896at2759"/>
<dbReference type="PRO" id="PR:Q9M9F9"/>
<dbReference type="Proteomes" id="UP000006548">
    <property type="component" value="Chromosome 1"/>
</dbReference>
<dbReference type="ExpressionAtlas" id="Q9M9F9">
    <property type="expression patterns" value="baseline and differential"/>
</dbReference>
<dbReference type="InterPro" id="IPR029688">
    <property type="entry name" value="ICR"/>
</dbReference>
<dbReference type="PANTHER" id="PTHR34224">
    <property type="entry name" value="INTERACTOR OF CONSTITUTIVE ACTIVE ROPS 2, CHLOROPLASTIC-RELATED"/>
    <property type="match status" value="1"/>
</dbReference>
<dbReference type="PANTHER" id="PTHR34224:SF2">
    <property type="entry name" value="INTERACTOR OF CONSTITUTIVE ACTIVE ROPS 4"/>
    <property type="match status" value="1"/>
</dbReference>
<accession>Q9M9F9</accession>
<accession>F4IA81</accession>
<feature type="chain" id="PRO_0000220599" description="Interactor of constitutive active ROPs 4">
    <location>
        <begin position="1"/>
        <end position="324"/>
    </location>
</feature>
<feature type="region of interest" description="Disordered" evidence="3">
    <location>
        <begin position="1"/>
        <end position="74"/>
    </location>
</feature>
<feature type="region of interest" description="Disordered" evidence="3">
    <location>
        <begin position="91"/>
        <end position="156"/>
    </location>
</feature>
<feature type="region of interest" description="Disordered" evidence="3">
    <location>
        <begin position="175"/>
        <end position="201"/>
    </location>
</feature>
<feature type="region of interest" description="Disordered" evidence="3">
    <location>
        <begin position="289"/>
        <end position="324"/>
    </location>
</feature>
<feature type="coiled-coil region" evidence="2">
    <location>
        <begin position="62"/>
        <end position="266"/>
    </location>
</feature>
<feature type="compositionally biased region" description="Low complexity" evidence="3">
    <location>
        <begin position="13"/>
        <end position="28"/>
    </location>
</feature>
<feature type="compositionally biased region" description="Basic and acidic residues" evidence="3">
    <location>
        <begin position="29"/>
        <end position="50"/>
    </location>
</feature>
<feature type="compositionally biased region" description="Basic and acidic residues" evidence="3">
    <location>
        <begin position="95"/>
        <end position="106"/>
    </location>
</feature>
<feature type="compositionally biased region" description="Basic and acidic residues" evidence="3">
    <location>
        <begin position="118"/>
        <end position="156"/>
    </location>
</feature>
<feature type="compositionally biased region" description="Basic and acidic residues" evidence="3">
    <location>
        <begin position="313"/>
        <end position="324"/>
    </location>
</feature>
<reference key="1">
    <citation type="journal article" date="2000" name="Nature">
        <title>Sequence and analysis of chromosome 1 of the plant Arabidopsis thaliana.</title>
        <authorList>
            <person name="Theologis A."/>
            <person name="Ecker J.R."/>
            <person name="Palm C.J."/>
            <person name="Federspiel N.A."/>
            <person name="Kaul S."/>
            <person name="White O."/>
            <person name="Alonso J."/>
            <person name="Altafi H."/>
            <person name="Araujo R."/>
            <person name="Bowman C.L."/>
            <person name="Brooks S.Y."/>
            <person name="Buehler E."/>
            <person name="Chan A."/>
            <person name="Chao Q."/>
            <person name="Chen H."/>
            <person name="Cheuk R.F."/>
            <person name="Chin C.W."/>
            <person name="Chung M.K."/>
            <person name="Conn L."/>
            <person name="Conway A.B."/>
            <person name="Conway A.R."/>
            <person name="Creasy T.H."/>
            <person name="Dewar K."/>
            <person name="Dunn P."/>
            <person name="Etgu P."/>
            <person name="Feldblyum T.V."/>
            <person name="Feng J.-D."/>
            <person name="Fong B."/>
            <person name="Fujii C.Y."/>
            <person name="Gill J.E."/>
            <person name="Goldsmith A.D."/>
            <person name="Haas B."/>
            <person name="Hansen N.F."/>
            <person name="Hughes B."/>
            <person name="Huizar L."/>
            <person name="Hunter J.L."/>
            <person name="Jenkins J."/>
            <person name="Johnson-Hopson C."/>
            <person name="Khan S."/>
            <person name="Khaykin E."/>
            <person name="Kim C.J."/>
            <person name="Koo H.L."/>
            <person name="Kremenetskaia I."/>
            <person name="Kurtz D.B."/>
            <person name="Kwan A."/>
            <person name="Lam B."/>
            <person name="Langin-Hooper S."/>
            <person name="Lee A."/>
            <person name="Lee J.M."/>
            <person name="Lenz C.A."/>
            <person name="Li J.H."/>
            <person name="Li Y.-P."/>
            <person name="Lin X."/>
            <person name="Liu S.X."/>
            <person name="Liu Z.A."/>
            <person name="Luros J.S."/>
            <person name="Maiti R."/>
            <person name="Marziali A."/>
            <person name="Militscher J."/>
            <person name="Miranda M."/>
            <person name="Nguyen M."/>
            <person name="Nierman W.C."/>
            <person name="Osborne B.I."/>
            <person name="Pai G."/>
            <person name="Peterson J."/>
            <person name="Pham P.K."/>
            <person name="Rizzo M."/>
            <person name="Rooney T."/>
            <person name="Rowley D."/>
            <person name="Sakano H."/>
            <person name="Salzberg S.L."/>
            <person name="Schwartz J.R."/>
            <person name="Shinn P."/>
            <person name="Southwick A.M."/>
            <person name="Sun H."/>
            <person name="Tallon L.J."/>
            <person name="Tambunga G."/>
            <person name="Toriumi M.J."/>
            <person name="Town C.D."/>
            <person name="Utterback T."/>
            <person name="Van Aken S."/>
            <person name="Vaysberg M."/>
            <person name="Vysotskaia V.S."/>
            <person name="Walker M."/>
            <person name="Wu D."/>
            <person name="Yu G."/>
            <person name="Fraser C.M."/>
            <person name="Venter J.C."/>
            <person name="Davis R.W."/>
        </authorList>
    </citation>
    <scope>NUCLEOTIDE SEQUENCE [LARGE SCALE GENOMIC DNA]</scope>
    <source>
        <strain>cv. Columbia</strain>
    </source>
</reference>
<reference key="2">
    <citation type="journal article" date="2017" name="Plant J.">
        <title>Araport11: a complete reannotation of the Arabidopsis thaliana reference genome.</title>
        <authorList>
            <person name="Cheng C.Y."/>
            <person name="Krishnakumar V."/>
            <person name="Chan A.P."/>
            <person name="Thibaud-Nissen F."/>
            <person name="Schobel S."/>
            <person name="Town C.D."/>
        </authorList>
    </citation>
    <scope>GENOME REANNOTATION</scope>
    <source>
        <strain>cv. Columbia</strain>
    </source>
</reference>
<reference key="3">
    <citation type="journal article" date="2008" name="Mol. Plant">
        <title>RIP1 (ROP Interactive Partner 1)/ICR1 marks pollen germination sites and may act in the ROP1 pathway in the control of polarized pollen growth.</title>
        <authorList>
            <person name="Li S."/>
            <person name="Gu Y."/>
            <person name="Yan A."/>
            <person name="Lord E."/>
            <person name="Yang Z.B."/>
        </authorList>
    </citation>
    <scope>INTERACTION WITH ARAC11</scope>
    <scope>GENE FAMILY</scope>
    <scope>NOMENCLATURE</scope>
</reference>
<name>ICR4_ARATH</name>
<protein>
    <recommendedName>
        <fullName>Interactor of constitutive active ROPs 4</fullName>
    </recommendedName>
    <alternativeName>
        <fullName>ROP-interactive partner 4</fullName>
    </alternativeName>
</protein>
<organism>
    <name type="scientific">Arabidopsis thaliana</name>
    <name type="common">Mouse-ear cress</name>
    <dbReference type="NCBI Taxonomy" id="3702"/>
    <lineage>
        <taxon>Eukaryota</taxon>
        <taxon>Viridiplantae</taxon>
        <taxon>Streptophyta</taxon>
        <taxon>Embryophyta</taxon>
        <taxon>Tracheophyta</taxon>
        <taxon>Spermatophyta</taxon>
        <taxon>Magnoliopsida</taxon>
        <taxon>eudicotyledons</taxon>
        <taxon>Gunneridae</taxon>
        <taxon>Pentapetalae</taxon>
        <taxon>rosids</taxon>
        <taxon>malvids</taxon>
        <taxon>Brassicales</taxon>
        <taxon>Brassicaceae</taxon>
        <taxon>Camelineae</taxon>
        <taxon>Arabidopsis</taxon>
    </lineage>
</organism>
<keyword id="KW-0175">Coiled coil</keyword>
<keyword id="KW-1185">Reference proteome</keyword>
<proteinExistence type="evidence at protein level"/>
<evidence type="ECO:0000250" key="1"/>
<evidence type="ECO:0000255" key="2"/>
<evidence type="ECO:0000256" key="3">
    <source>
        <dbReference type="SAM" id="MobiDB-lite"/>
    </source>
</evidence>
<evidence type="ECO:0000269" key="4">
    <source>
    </source>
</evidence>
<evidence type="ECO:0000305" key="5"/>
<sequence length="324" mass="36057">MPKPSIRGSELPQRQSPRLRTSLLSTSSDPHHLSRPITDRSPKLGLDRRSPRSGGPHTDPLSQKKLGSRISGLESQLGQAQEELRLLKQQLAKAEAAKKRAQEELHRKKSKKPNTPAPERDDIPGDGHQETDVFEVLDEKAKESEKTKNDELASKEDQINVLKARLYDLEKERVSLSEENETLKDQLKKTDTEMSCAKAKEDEIASKVSQIGEELEESNETTAKLKKKLESVEEAKETLEAEMKKLKVQTEQWRKAADAAAAVLSGGVEMNGRFSEQCGSMEKHFAGRFVGSPGMADDSDDGSGKRKSSGKKMFGDLWKKKGQK</sequence>
<gene>
    <name type="primary">ICR4</name>
    <name type="synonym">RIP4</name>
    <name type="ordered locus">At1g78430</name>
    <name type="ORF">F3F9.6</name>
</gene>
<comment type="function">
    <text evidence="1">Acts as a scaffold, mediating interaction of ROPs with different proteins.</text>
</comment>
<comment type="subunit">
    <text evidence="4">Interacts with ARAC11 in vitro.</text>
</comment>
<comment type="similarity">
    <text evidence="5">Belongs to the ICR family.</text>
</comment>
<comment type="sequence caution" evidence="5">
    <conflict type="erroneous gene model prediction">
        <sequence resource="EMBL-CDS" id="AAF71812"/>
    </conflict>
</comment>